<protein>
    <recommendedName>
        <fullName evidence="1">3-octaprenyl-4-hydroxybenzoate carboxy-lyase</fullName>
        <ecNumber evidence="1">4.1.1.98</ecNumber>
    </recommendedName>
    <alternativeName>
        <fullName evidence="1">Polyprenyl p-hydroxybenzoate decarboxylase</fullName>
    </alternativeName>
</protein>
<evidence type="ECO:0000255" key="1">
    <source>
        <dbReference type="HAMAP-Rule" id="MF_01636"/>
    </source>
</evidence>
<name>UBID_YERPS</name>
<keyword id="KW-1003">Cell membrane</keyword>
<keyword id="KW-0210">Decarboxylase</keyword>
<keyword id="KW-0285">Flavoprotein</keyword>
<keyword id="KW-0288">FMN</keyword>
<keyword id="KW-0456">Lyase</keyword>
<keyword id="KW-0464">Manganese</keyword>
<keyword id="KW-0472">Membrane</keyword>
<keyword id="KW-0479">Metal-binding</keyword>
<keyword id="KW-0831">Ubiquinone biosynthesis</keyword>
<comment type="function">
    <text evidence="1">Catalyzes the decarboxylation of 3-octaprenyl-4-hydroxy benzoate to 2-octaprenylphenol, an intermediate step in ubiquinone biosynthesis.</text>
</comment>
<comment type="catalytic activity">
    <reaction evidence="1">
        <text>a 4-hydroxy-3-(all-trans-polyprenyl)benzoate + H(+) = a 2-(all-trans-polyprenyl)phenol + CO2</text>
        <dbReference type="Rhea" id="RHEA:41680"/>
        <dbReference type="Rhea" id="RHEA-COMP:9514"/>
        <dbReference type="Rhea" id="RHEA-COMP:9516"/>
        <dbReference type="ChEBI" id="CHEBI:1269"/>
        <dbReference type="ChEBI" id="CHEBI:15378"/>
        <dbReference type="ChEBI" id="CHEBI:16526"/>
        <dbReference type="ChEBI" id="CHEBI:78396"/>
        <dbReference type="EC" id="4.1.1.98"/>
    </reaction>
</comment>
<comment type="cofactor">
    <cofactor evidence="1">
        <name>prenylated FMN</name>
        <dbReference type="ChEBI" id="CHEBI:87746"/>
    </cofactor>
    <text evidence="1">Binds 1 prenylated FMN per subunit.</text>
</comment>
<comment type="cofactor">
    <cofactor evidence="1">
        <name>Mn(2+)</name>
        <dbReference type="ChEBI" id="CHEBI:29035"/>
    </cofactor>
</comment>
<comment type="pathway">
    <text evidence="1">Cofactor biosynthesis; ubiquinone biosynthesis.</text>
</comment>
<comment type="subunit">
    <text evidence="1">Homohexamer.</text>
</comment>
<comment type="subcellular location">
    <subcellularLocation>
        <location evidence="1">Cell membrane</location>
        <topology evidence="1">Peripheral membrane protein</topology>
    </subcellularLocation>
</comment>
<comment type="similarity">
    <text evidence="1">Belongs to the UbiD family.</text>
</comment>
<sequence>MISMKYRDLRDFLSLLEQRGELKRISQPIDPYLEMTEIADRTLRAGGPALLFENPKGYSMPVLCNLFGTAKRVAMGMGQEDVSALRDVGKLLAFLKEPDPPKGFRDLFDKLPKFKQVLNMPTKRLNSAPCQEQVWQGEDVDLSRIPVMHCWPEDAAPLVSWGLTITRGPHKERQNLGIYRQQVLGKNKLIMRWLSHRGGALDYQEWCEAHPGERFPVAVALGADPATILAAVTPVPDTLSEYAFAGLLRGHKTEVVKCLSNDLEVPASAEIVLEGYIEQGDMAPEGPYGDHTGYYNEIDNFPVFTVTHITQRQDAIYHSTYTGRPPDEPAVMGVALNEVFVPILQKQFPEIVDFYLPPEGCSYRLAVVTIKKQYAGHAKRVMMGVWSFLRQFMYTKFVIVCDDDINARDWNDVIWAITTRMDPSRDTVLIENTPIDYLDFASPVSGLGSKMGLDATNKWPAETPREWGRPIKMDEDVRARIDALWDELAIFSDKDAKR</sequence>
<feature type="chain" id="PRO_0000267713" description="3-octaprenyl-4-hydroxybenzoate carboxy-lyase">
    <location>
        <begin position="1"/>
        <end position="498"/>
    </location>
</feature>
<feature type="active site" description="Proton donor" evidence="1">
    <location>
        <position position="290"/>
    </location>
</feature>
<feature type="binding site" evidence="1">
    <location>
        <position position="175"/>
    </location>
    <ligand>
        <name>Mn(2+)</name>
        <dbReference type="ChEBI" id="CHEBI:29035"/>
    </ligand>
</feature>
<feature type="binding site" evidence="1">
    <location>
        <begin position="178"/>
        <end position="180"/>
    </location>
    <ligand>
        <name>prenylated FMN</name>
        <dbReference type="ChEBI" id="CHEBI:87746"/>
    </ligand>
</feature>
<feature type="binding site" evidence="1">
    <location>
        <begin position="192"/>
        <end position="194"/>
    </location>
    <ligand>
        <name>prenylated FMN</name>
        <dbReference type="ChEBI" id="CHEBI:87746"/>
    </ligand>
</feature>
<feature type="binding site" evidence="1">
    <location>
        <begin position="197"/>
        <end position="198"/>
    </location>
    <ligand>
        <name>prenylated FMN</name>
        <dbReference type="ChEBI" id="CHEBI:87746"/>
    </ligand>
</feature>
<feature type="binding site" evidence="1">
    <location>
        <position position="241"/>
    </location>
    <ligand>
        <name>Mn(2+)</name>
        <dbReference type="ChEBI" id="CHEBI:29035"/>
    </ligand>
</feature>
<dbReference type="EC" id="4.1.1.98" evidence="1"/>
<dbReference type="EMBL" id="BX936398">
    <property type="protein sequence ID" value="CAH19504.1"/>
    <property type="molecule type" value="Genomic_DNA"/>
</dbReference>
<dbReference type="RefSeq" id="WP_011191546.1">
    <property type="nucleotide sequence ID" value="NC_006155.1"/>
</dbReference>
<dbReference type="SMR" id="Q66FS1"/>
<dbReference type="GeneID" id="49787754"/>
<dbReference type="KEGG" id="ypo:BZ17_2319"/>
<dbReference type="KEGG" id="yps:YPTB0264"/>
<dbReference type="PATRIC" id="fig|273123.14.peg.2442"/>
<dbReference type="UniPathway" id="UPA00232"/>
<dbReference type="Proteomes" id="UP000001011">
    <property type="component" value="Chromosome"/>
</dbReference>
<dbReference type="GO" id="GO:0005829">
    <property type="term" value="C:cytosol"/>
    <property type="evidence" value="ECO:0007669"/>
    <property type="project" value="TreeGrafter"/>
</dbReference>
<dbReference type="GO" id="GO:0005886">
    <property type="term" value="C:plasma membrane"/>
    <property type="evidence" value="ECO:0007669"/>
    <property type="project" value="UniProtKB-SubCell"/>
</dbReference>
<dbReference type="GO" id="GO:0008694">
    <property type="term" value="F:3-octaprenyl-4-hydroxybenzoate carboxy-lyase activity"/>
    <property type="evidence" value="ECO:0007669"/>
    <property type="project" value="UniProtKB-UniRule"/>
</dbReference>
<dbReference type="GO" id="GO:0046872">
    <property type="term" value="F:metal ion binding"/>
    <property type="evidence" value="ECO:0007669"/>
    <property type="project" value="UniProtKB-KW"/>
</dbReference>
<dbReference type="GO" id="GO:0006744">
    <property type="term" value="P:ubiquinone biosynthetic process"/>
    <property type="evidence" value="ECO:0007669"/>
    <property type="project" value="UniProtKB-UniRule"/>
</dbReference>
<dbReference type="FunFam" id="1.20.5.570:FF:000001">
    <property type="entry name" value="3-octaprenyl-4-hydroxybenzoate carboxy-lyase"/>
    <property type="match status" value="1"/>
</dbReference>
<dbReference type="FunFam" id="3.40.1670.10:FF:000001">
    <property type="entry name" value="3-octaprenyl-4-hydroxybenzoate carboxy-lyase"/>
    <property type="match status" value="1"/>
</dbReference>
<dbReference type="Gene3D" id="1.20.5.570">
    <property type="entry name" value="Single helix bin"/>
    <property type="match status" value="1"/>
</dbReference>
<dbReference type="Gene3D" id="3.40.1670.10">
    <property type="entry name" value="UbiD C-terminal domain-like"/>
    <property type="match status" value="1"/>
</dbReference>
<dbReference type="HAMAP" id="MF_01636">
    <property type="entry name" value="UbiD"/>
    <property type="match status" value="1"/>
</dbReference>
<dbReference type="InterPro" id="IPR002830">
    <property type="entry name" value="UbiD"/>
</dbReference>
<dbReference type="InterPro" id="IPR049381">
    <property type="entry name" value="UbiD-like_C"/>
</dbReference>
<dbReference type="InterPro" id="IPR049383">
    <property type="entry name" value="UbiD-like_N"/>
</dbReference>
<dbReference type="InterPro" id="IPR023677">
    <property type="entry name" value="UbiD_bacteria"/>
</dbReference>
<dbReference type="InterPro" id="IPR048304">
    <property type="entry name" value="UbiD_Rift_dom"/>
</dbReference>
<dbReference type="NCBIfam" id="NF008175">
    <property type="entry name" value="PRK10922.1"/>
    <property type="match status" value="1"/>
</dbReference>
<dbReference type="NCBIfam" id="TIGR00148">
    <property type="entry name" value="UbiD family decarboxylase"/>
    <property type="match status" value="1"/>
</dbReference>
<dbReference type="PANTHER" id="PTHR30108">
    <property type="entry name" value="3-OCTAPRENYL-4-HYDROXYBENZOATE CARBOXY-LYASE-RELATED"/>
    <property type="match status" value="1"/>
</dbReference>
<dbReference type="PANTHER" id="PTHR30108:SF17">
    <property type="entry name" value="FERULIC ACID DECARBOXYLASE 1"/>
    <property type="match status" value="1"/>
</dbReference>
<dbReference type="Pfam" id="PF01977">
    <property type="entry name" value="UbiD"/>
    <property type="match status" value="1"/>
</dbReference>
<dbReference type="Pfam" id="PF20696">
    <property type="entry name" value="UbiD_C"/>
    <property type="match status" value="1"/>
</dbReference>
<dbReference type="Pfam" id="PF20695">
    <property type="entry name" value="UbiD_N"/>
    <property type="match status" value="1"/>
</dbReference>
<dbReference type="SUPFAM" id="SSF50475">
    <property type="entry name" value="FMN-binding split barrel"/>
    <property type="match status" value="1"/>
</dbReference>
<dbReference type="SUPFAM" id="SSF143968">
    <property type="entry name" value="UbiD C-terminal domain-like"/>
    <property type="match status" value="1"/>
</dbReference>
<organism>
    <name type="scientific">Yersinia pseudotuberculosis serotype I (strain IP32953)</name>
    <dbReference type="NCBI Taxonomy" id="273123"/>
    <lineage>
        <taxon>Bacteria</taxon>
        <taxon>Pseudomonadati</taxon>
        <taxon>Pseudomonadota</taxon>
        <taxon>Gammaproteobacteria</taxon>
        <taxon>Enterobacterales</taxon>
        <taxon>Yersiniaceae</taxon>
        <taxon>Yersinia</taxon>
    </lineage>
</organism>
<reference key="1">
    <citation type="journal article" date="2004" name="Proc. Natl. Acad. Sci. U.S.A.">
        <title>Insights into the evolution of Yersinia pestis through whole-genome comparison with Yersinia pseudotuberculosis.</title>
        <authorList>
            <person name="Chain P.S.G."/>
            <person name="Carniel E."/>
            <person name="Larimer F.W."/>
            <person name="Lamerdin J."/>
            <person name="Stoutland P.O."/>
            <person name="Regala W.M."/>
            <person name="Georgescu A.M."/>
            <person name="Vergez L.M."/>
            <person name="Land M.L."/>
            <person name="Motin V.L."/>
            <person name="Brubaker R.R."/>
            <person name="Fowler J."/>
            <person name="Hinnebusch J."/>
            <person name="Marceau M."/>
            <person name="Medigue C."/>
            <person name="Simonet M."/>
            <person name="Chenal-Francisque V."/>
            <person name="Souza B."/>
            <person name="Dacheux D."/>
            <person name="Elliott J.M."/>
            <person name="Derbise A."/>
            <person name="Hauser L.J."/>
            <person name="Garcia E."/>
        </authorList>
    </citation>
    <scope>NUCLEOTIDE SEQUENCE [LARGE SCALE GENOMIC DNA]</scope>
    <source>
        <strain>IP32953</strain>
    </source>
</reference>
<proteinExistence type="inferred from homology"/>
<gene>
    <name evidence="1" type="primary">ubiD</name>
    <name type="ordered locus">YPTB0264</name>
</gene>
<accession>Q66FS1</accession>